<keyword id="KW-0030">Aminoacyl-tRNA synthetase</keyword>
<keyword id="KW-0067">ATP-binding</keyword>
<keyword id="KW-0963">Cytoplasm</keyword>
<keyword id="KW-0436">Ligase</keyword>
<keyword id="KW-0479">Metal-binding</keyword>
<keyword id="KW-0547">Nucleotide-binding</keyword>
<keyword id="KW-0648">Protein biosynthesis</keyword>
<keyword id="KW-1185">Reference proteome</keyword>
<keyword id="KW-0862">Zinc</keyword>
<protein>
    <recommendedName>
        <fullName evidence="1">Cysteine--tRNA ligase</fullName>
        <ecNumber evidence="1">6.1.1.16</ecNumber>
    </recommendedName>
    <alternativeName>
        <fullName evidence="1">Cysteinyl-tRNA synthetase</fullName>
        <shortName evidence="1">CysRS</shortName>
    </alternativeName>
</protein>
<gene>
    <name evidence="1" type="primary">cysS</name>
    <name type="ordered locus">SO_1791</name>
</gene>
<dbReference type="EC" id="6.1.1.16" evidence="1"/>
<dbReference type="EMBL" id="AE014299">
    <property type="protein sequence ID" value="AAN54844.1"/>
    <property type="molecule type" value="Genomic_DNA"/>
</dbReference>
<dbReference type="RefSeq" id="NP_717400.1">
    <property type="nucleotide sequence ID" value="NC_004347.2"/>
</dbReference>
<dbReference type="RefSeq" id="WP_011071913.1">
    <property type="nucleotide sequence ID" value="NC_004347.2"/>
</dbReference>
<dbReference type="SMR" id="Q8EG22"/>
<dbReference type="STRING" id="211586.SO_1791"/>
<dbReference type="PaxDb" id="211586-SO_1791"/>
<dbReference type="KEGG" id="son:SO_1791"/>
<dbReference type="PATRIC" id="fig|211586.12.peg.1721"/>
<dbReference type="eggNOG" id="COG0215">
    <property type="taxonomic scope" value="Bacteria"/>
</dbReference>
<dbReference type="HOGENOM" id="CLU_013528_0_1_6"/>
<dbReference type="OrthoDB" id="9815130at2"/>
<dbReference type="PhylomeDB" id="Q8EG22"/>
<dbReference type="BioCyc" id="SONE211586:G1GMP-1639-MONOMER"/>
<dbReference type="Proteomes" id="UP000008186">
    <property type="component" value="Chromosome"/>
</dbReference>
<dbReference type="GO" id="GO:0005737">
    <property type="term" value="C:cytoplasm"/>
    <property type="evidence" value="ECO:0000318"/>
    <property type="project" value="GO_Central"/>
</dbReference>
<dbReference type="GO" id="GO:0005829">
    <property type="term" value="C:cytosol"/>
    <property type="evidence" value="ECO:0000318"/>
    <property type="project" value="GO_Central"/>
</dbReference>
<dbReference type="GO" id="GO:0005524">
    <property type="term" value="F:ATP binding"/>
    <property type="evidence" value="ECO:0000318"/>
    <property type="project" value="GO_Central"/>
</dbReference>
<dbReference type="GO" id="GO:0004817">
    <property type="term" value="F:cysteine-tRNA ligase activity"/>
    <property type="evidence" value="ECO:0000318"/>
    <property type="project" value="GO_Central"/>
</dbReference>
<dbReference type="GO" id="GO:0008270">
    <property type="term" value="F:zinc ion binding"/>
    <property type="evidence" value="ECO:0007669"/>
    <property type="project" value="UniProtKB-UniRule"/>
</dbReference>
<dbReference type="GO" id="GO:0006423">
    <property type="term" value="P:cysteinyl-tRNA aminoacylation"/>
    <property type="evidence" value="ECO:0000318"/>
    <property type="project" value="GO_Central"/>
</dbReference>
<dbReference type="CDD" id="cd07963">
    <property type="entry name" value="Anticodon_Ia_Cys"/>
    <property type="match status" value="1"/>
</dbReference>
<dbReference type="CDD" id="cd00672">
    <property type="entry name" value="CysRS_core"/>
    <property type="match status" value="1"/>
</dbReference>
<dbReference type="FunFam" id="1.20.120.1910:FF:000001">
    <property type="entry name" value="Cysteine--tRNA ligase"/>
    <property type="match status" value="1"/>
</dbReference>
<dbReference type="FunFam" id="3.40.50.620:FF:000009">
    <property type="entry name" value="Cysteine--tRNA ligase"/>
    <property type="match status" value="1"/>
</dbReference>
<dbReference type="Gene3D" id="1.20.120.1910">
    <property type="entry name" value="Cysteine-tRNA ligase, C-terminal anti-codon recognition domain"/>
    <property type="match status" value="1"/>
</dbReference>
<dbReference type="Gene3D" id="3.40.50.620">
    <property type="entry name" value="HUPs"/>
    <property type="match status" value="1"/>
</dbReference>
<dbReference type="HAMAP" id="MF_00041">
    <property type="entry name" value="Cys_tRNA_synth"/>
    <property type="match status" value="1"/>
</dbReference>
<dbReference type="InterPro" id="IPR015803">
    <property type="entry name" value="Cys-tRNA-ligase"/>
</dbReference>
<dbReference type="InterPro" id="IPR015273">
    <property type="entry name" value="Cys-tRNA-synt_Ia_DALR"/>
</dbReference>
<dbReference type="InterPro" id="IPR024909">
    <property type="entry name" value="Cys-tRNA/MSH_ligase"/>
</dbReference>
<dbReference type="InterPro" id="IPR056411">
    <property type="entry name" value="CysS_C"/>
</dbReference>
<dbReference type="InterPro" id="IPR014729">
    <property type="entry name" value="Rossmann-like_a/b/a_fold"/>
</dbReference>
<dbReference type="InterPro" id="IPR032678">
    <property type="entry name" value="tRNA-synt_1_cat_dom"/>
</dbReference>
<dbReference type="InterPro" id="IPR009080">
    <property type="entry name" value="tRNAsynth_Ia_anticodon-bd"/>
</dbReference>
<dbReference type="NCBIfam" id="TIGR00435">
    <property type="entry name" value="cysS"/>
    <property type="match status" value="1"/>
</dbReference>
<dbReference type="PANTHER" id="PTHR10890:SF3">
    <property type="entry name" value="CYSTEINE--TRNA LIGASE, CYTOPLASMIC"/>
    <property type="match status" value="1"/>
</dbReference>
<dbReference type="PANTHER" id="PTHR10890">
    <property type="entry name" value="CYSTEINYL-TRNA SYNTHETASE"/>
    <property type="match status" value="1"/>
</dbReference>
<dbReference type="Pfam" id="PF23493">
    <property type="entry name" value="CysS_C"/>
    <property type="match status" value="1"/>
</dbReference>
<dbReference type="Pfam" id="PF09190">
    <property type="entry name" value="DALR_2"/>
    <property type="match status" value="1"/>
</dbReference>
<dbReference type="Pfam" id="PF01406">
    <property type="entry name" value="tRNA-synt_1e"/>
    <property type="match status" value="1"/>
</dbReference>
<dbReference type="PRINTS" id="PR00983">
    <property type="entry name" value="TRNASYNTHCYS"/>
</dbReference>
<dbReference type="SMART" id="SM00840">
    <property type="entry name" value="DALR_2"/>
    <property type="match status" value="1"/>
</dbReference>
<dbReference type="SUPFAM" id="SSF47323">
    <property type="entry name" value="Anticodon-binding domain of a subclass of class I aminoacyl-tRNA synthetases"/>
    <property type="match status" value="1"/>
</dbReference>
<dbReference type="SUPFAM" id="SSF52374">
    <property type="entry name" value="Nucleotidylyl transferase"/>
    <property type="match status" value="1"/>
</dbReference>
<sequence>MLKIYNSITRQKQEFKPINPGKVGMYVCGVTVYDLCHIGHGRTFVSFDMIVRYLRYAGYEVNFQRNITDIDDKIIKRANENQEDCNTLTDRLIGEMHKDFDALNMKRPDFEPRATLHIAEIIDMVERLLARGHAYVAADGDVLFSVASFPEYGRLSGQNLEQLQAGARVEVDDNKQNPMDFVLWKMSKPGEPTWESPWGPGRPGWHIECSAMNSKHLGLHFDIHGGGSDLQFPHHENEIAQSCCAHDTPYVNYWMHTGMVMIDREKMSKSLGNFFTIRDVLSHYDAETVRYFLLSGHYRSQINYSEENLKQARAALERLYTAIKDVDLTVAAAPAEEFVAKFKAAMDDDFNTPEAYSVLFDMVREINRLKLTDMAEASALAVSMKQLADVLGLLHQSPDAFFKGEGSDDEVAEIEALIVERNRARTEKDWPAADVARNRLNELGVVLEDGPSGTTWRKK</sequence>
<accession>Q8EG22</accession>
<feature type="chain" id="PRO_0000159474" description="Cysteine--tRNA ligase">
    <location>
        <begin position="1"/>
        <end position="459"/>
    </location>
</feature>
<feature type="short sequence motif" description="'HIGH' region">
    <location>
        <begin position="30"/>
        <end position="40"/>
    </location>
</feature>
<feature type="short sequence motif" description="'KMSKS' region">
    <location>
        <begin position="266"/>
        <end position="270"/>
    </location>
</feature>
<feature type="binding site" evidence="1">
    <location>
        <position position="28"/>
    </location>
    <ligand>
        <name>Zn(2+)</name>
        <dbReference type="ChEBI" id="CHEBI:29105"/>
    </ligand>
</feature>
<feature type="binding site" evidence="1">
    <location>
        <position position="209"/>
    </location>
    <ligand>
        <name>Zn(2+)</name>
        <dbReference type="ChEBI" id="CHEBI:29105"/>
    </ligand>
</feature>
<feature type="binding site" evidence="1">
    <location>
        <position position="234"/>
    </location>
    <ligand>
        <name>Zn(2+)</name>
        <dbReference type="ChEBI" id="CHEBI:29105"/>
    </ligand>
</feature>
<feature type="binding site" evidence="1">
    <location>
        <position position="238"/>
    </location>
    <ligand>
        <name>Zn(2+)</name>
        <dbReference type="ChEBI" id="CHEBI:29105"/>
    </ligand>
</feature>
<feature type="binding site" evidence="1">
    <location>
        <position position="269"/>
    </location>
    <ligand>
        <name>ATP</name>
        <dbReference type="ChEBI" id="CHEBI:30616"/>
    </ligand>
</feature>
<organism>
    <name type="scientific">Shewanella oneidensis (strain ATCC 700550 / JCM 31522 / CIP 106686 / LMG 19005 / NCIMB 14063 / MR-1)</name>
    <dbReference type="NCBI Taxonomy" id="211586"/>
    <lineage>
        <taxon>Bacteria</taxon>
        <taxon>Pseudomonadati</taxon>
        <taxon>Pseudomonadota</taxon>
        <taxon>Gammaproteobacteria</taxon>
        <taxon>Alteromonadales</taxon>
        <taxon>Shewanellaceae</taxon>
        <taxon>Shewanella</taxon>
    </lineage>
</organism>
<evidence type="ECO:0000255" key="1">
    <source>
        <dbReference type="HAMAP-Rule" id="MF_00041"/>
    </source>
</evidence>
<proteinExistence type="inferred from homology"/>
<comment type="catalytic activity">
    <reaction evidence="1">
        <text>tRNA(Cys) + L-cysteine + ATP = L-cysteinyl-tRNA(Cys) + AMP + diphosphate</text>
        <dbReference type="Rhea" id="RHEA:17773"/>
        <dbReference type="Rhea" id="RHEA-COMP:9661"/>
        <dbReference type="Rhea" id="RHEA-COMP:9679"/>
        <dbReference type="ChEBI" id="CHEBI:30616"/>
        <dbReference type="ChEBI" id="CHEBI:33019"/>
        <dbReference type="ChEBI" id="CHEBI:35235"/>
        <dbReference type="ChEBI" id="CHEBI:78442"/>
        <dbReference type="ChEBI" id="CHEBI:78517"/>
        <dbReference type="ChEBI" id="CHEBI:456215"/>
        <dbReference type="EC" id="6.1.1.16"/>
    </reaction>
</comment>
<comment type="cofactor">
    <cofactor evidence="1">
        <name>Zn(2+)</name>
        <dbReference type="ChEBI" id="CHEBI:29105"/>
    </cofactor>
    <text evidence="1">Binds 1 zinc ion per subunit.</text>
</comment>
<comment type="subunit">
    <text evidence="1">Monomer.</text>
</comment>
<comment type="subcellular location">
    <subcellularLocation>
        <location evidence="1">Cytoplasm</location>
    </subcellularLocation>
</comment>
<comment type="similarity">
    <text evidence="1">Belongs to the class-I aminoacyl-tRNA synthetase family.</text>
</comment>
<reference key="1">
    <citation type="journal article" date="2002" name="Nat. Biotechnol.">
        <title>Genome sequence of the dissimilatory metal ion-reducing bacterium Shewanella oneidensis.</title>
        <authorList>
            <person name="Heidelberg J.F."/>
            <person name="Paulsen I.T."/>
            <person name="Nelson K.E."/>
            <person name="Gaidos E.J."/>
            <person name="Nelson W.C."/>
            <person name="Read T.D."/>
            <person name="Eisen J.A."/>
            <person name="Seshadri R."/>
            <person name="Ward N.L."/>
            <person name="Methe B.A."/>
            <person name="Clayton R.A."/>
            <person name="Meyer T."/>
            <person name="Tsapin A."/>
            <person name="Scott J."/>
            <person name="Beanan M.J."/>
            <person name="Brinkac L.M."/>
            <person name="Daugherty S.C."/>
            <person name="DeBoy R.T."/>
            <person name="Dodson R.J."/>
            <person name="Durkin A.S."/>
            <person name="Haft D.H."/>
            <person name="Kolonay J.F."/>
            <person name="Madupu R."/>
            <person name="Peterson J.D."/>
            <person name="Umayam L.A."/>
            <person name="White O."/>
            <person name="Wolf A.M."/>
            <person name="Vamathevan J.J."/>
            <person name="Weidman J.F."/>
            <person name="Impraim M."/>
            <person name="Lee K."/>
            <person name="Berry K.J."/>
            <person name="Lee C."/>
            <person name="Mueller J."/>
            <person name="Khouri H.M."/>
            <person name="Gill J."/>
            <person name="Utterback T.R."/>
            <person name="McDonald L.A."/>
            <person name="Feldblyum T.V."/>
            <person name="Smith H.O."/>
            <person name="Venter J.C."/>
            <person name="Nealson K.H."/>
            <person name="Fraser C.M."/>
        </authorList>
    </citation>
    <scope>NUCLEOTIDE SEQUENCE [LARGE SCALE GENOMIC DNA]</scope>
    <source>
        <strain>ATCC 700550 / JCM 31522 / CIP 106686 / LMG 19005 / NCIMB 14063 / MR-1</strain>
    </source>
</reference>
<name>SYC_SHEON</name>